<feature type="signal peptide" evidence="2">
    <location>
        <begin position="1"/>
        <end position="24"/>
    </location>
</feature>
<feature type="chain" id="PRO_0000010803" description="Germin-like protein subfamily 1 member 3">
    <location>
        <begin position="25"/>
        <end position="227"/>
    </location>
</feature>
<feature type="domain" description="Cupin type-1" evidence="2">
    <location>
        <begin position="64"/>
        <end position="212"/>
    </location>
</feature>
<feature type="binding site" evidence="1">
    <location>
        <position position="109"/>
    </location>
    <ligand>
        <name>Mn(2+)</name>
        <dbReference type="ChEBI" id="CHEBI:29035"/>
    </ligand>
</feature>
<feature type="binding site" evidence="1">
    <location>
        <position position="111"/>
    </location>
    <ligand>
        <name>Mn(2+)</name>
        <dbReference type="ChEBI" id="CHEBI:29035"/>
    </ligand>
</feature>
<feature type="binding site" evidence="1">
    <location>
        <position position="116"/>
    </location>
    <ligand>
        <name>Mn(2+)</name>
        <dbReference type="ChEBI" id="CHEBI:29035"/>
    </ligand>
</feature>
<feature type="binding site" evidence="1">
    <location>
        <position position="160"/>
    </location>
    <ligand>
        <name>Mn(2+)</name>
        <dbReference type="ChEBI" id="CHEBI:29035"/>
    </ligand>
</feature>
<feature type="glycosylation site" description="N-linked (GlcNAc...) asparagine" evidence="2">
    <location>
        <position position="136"/>
    </location>
</feature>
<feature type="disulfide bond" evidence="1">
    <location>
        <begin position="34"/>
        <end position="50"/>
    </location>
</feature>
<sequence>MKYPFQCFLAKIILLALASSFVSCYDPSPLQDYCVAVPEKNGVFVNGEFCKDPKLVTSDDFFASGLNIPGNTNKRLGSFVNPANIPGLNTLGVGIARIDFAPGGLIPPHIHPRASEIILVIKGKLLVGFVSSNDYNYTLFSKILYPGDVFVHPIGLVQFHANIGKTNAVAIGAVGSQNPGYISVGDAVFGSKPPIDPKILAKAFALDINIVRYLRKVFSPQDDIVND</sequence>
<comment type="function">
    <text>May play a role in plant defense. Probably has no oxalate oxidase activity even if the active site is conserved.</text>
</comment>
<comment type="subunit">
    <text evidence="1">Oligomer (believed to be a pentamer but probably hexamer).</text>
</comment>
<comment type="subcellular location">
    <subcellularLocation>
        <location evidence="1">Secreted</location>
        <location evidence="1">Extracellular space</location>
        <location evidence="1">Apoplast</location>
    </subcellularLocation>
</comment>
<comment type="similarity">
    <text evidence="3">Belongs to the germin family.</text>
</comment>
<proteinExistence type="evidence at transcript level"/>
<evidence type="ECO:0000250" key="1"/>
<evidence type="ECO:0000255" key="2"/>
<evidence type="ECO:0000305" key="3"/>
<keyword id="KW-0052">Apoplast</keyword>
<keyword id="KW-1015">Disulfide bond</keyword>
<keyword id="KW-0325">Glycoprotein</keyword>
<keyword id="KW-0464">Manganese</keyword>
<keyword id="KW-0479">Metal-binding</keyword>
<keyword id="KW-1185">Reference proteome</keyword>
<keyword id="KW-0964">Secreted</keyword>
<keyword id="KW-0732">Signal</keyword>
<organism>
    <name type="scientific">Arabidopsis thaliana</name>
    <name type="common">Mouse-ear cress</name>
    <dbReference type="NCBI Taxonomy" id="3702"/>
    <lineage>
        <taxon>Eukaryota</taxon>
        <taxon>Viridiplantae</taxon>
        <taxon>Streptophyta</taxon>
        <taxon>Embryophyta</taxon>
        <taxon>Tracheophyta</taxon>
        <taxon>Spermatophyta</taxon>
        <taxon>Magnoliopsida</taxon>
        <taxon>eudicotyledons</taxon>
        <taxon>Gunneridae</taxon>
        <taxon>Pentapetalae</taxon>
        <taxon>rosids</taxon>
        <taxon>malvids</taxon>
        <taxon>Brassicales</taxon>
        <taxon>Brassicaceae</taxon>
        <taxon>Camelineae</taxon>
        <taxon>Arabidopsis</taxon>
    </lineage>
</organism>
<accession>Q9M8X3</accession>
<accession>Q6GKX0</accession>
<dbReference type="EMBL" id="AC016829">
    <property type="protein sequence ID" value="AAF26796.1"/>
    <property type="molecule type" value="Genomic_DNA"/>
</dbReference>
<dbReference type="EMBL" id="CP002686">
    <property type="protein sequence ID" value="AEE74047.1"/>
    <property type="molecule type" value="Genomic_DNA"/>
</dbReference>
<dbReference type="EMBL" id="BT014944">
    <property type="protein sequence ID" value="AAT47795.1"/>
    <property type="molecule type" value="mRNA"/>
</dbReference>
<dbReference type="RefSeq" id="NP_187067.1">
    <property type="nucleotide sequence ID" value="NM_111288.2"/>
</dbReference>
<dbReference type="SMR" id="Q9M8X3"/>
<dbReference type="FunCoup" id="Q9M8X3">
    <property type="interactions" value="28"/>
</dbReference>
<dbReference type="STRING" id="3702.Q9M8X3"/>
<dbReference type="GlyGen" id="Q9M8X3">
    <property type="glycosylation" value="1 site"/>
</dbReference>
<dbReference type="PaxDb" id="3702-AT3G04170.1"/>
<dbReference type="ProteomicsDB" id="230476"/>
<dbReference type="EnsemblPlants" id="AT3G04170.1">
    <property type="protein sequence ID" value="AT3G04170.1"/>
    <property type="gene ID" value="AT3G04170"/>
</dbReference>
<dbReference type="GeneID" id="819572"/>
<dbReference type="Gramene" id="AT3G04170.1">
    <property type="protein sequence ID" value="AT3G04170.1"/>
    <property type="gene ID" value="AT3G04170"/>
</dbReference>
<dbReference type="KEGG" id="ath:AT3G04170"/>
<dbReference type="Araport" id="AT3G04170"/>
<dbReference type="TAIR" id="AT3G04170"/>
<dbReference type="HOGENOM" id="CLU_015790_0_0_1"/>
<dbReference type="InParanoid" id="Q9M8X3"/>
<dbReference type="OMA" id="ELTFINM"/>
<dbReference type="PhylomeDB" id="Q9M8X3"/>
<dbReference type="PRO" id="PR:Q9M8X3"/>
<dbReference type="Proteomes" id="UP000006548">
    <property type="component" value="Chromosome 3"/>
</dbReference>
<dbReference type="ExpressionAtlas" id="Q9M8X3">
    <property type="expression patterns" value="baseline and differential"/>
</dbReference>
<dbReference type="GO" id="GO:0048046">
    <property type="term" value="C:apoplast"/>
    <property type="evidence" value="ECO:0007669"/>
    <property type="project" value="UniProtKB-SubCell"/>
</dbReference>
<dbReference type="GO" id="GO:0030145">
    <property type="term" value="F:manganese ion binding"/>
    <property type="evidence" value="ECO:0007669"/>
    <property type="project" value="InterPro"/>
</dbReference>
<dbReference type="CDD" id="cd02241">
    <property type="entry name" value="cupin_OxOx"/>
    <property type="match status" value="1"/>
</dbReference>
<dbReference type="FunFam" id="2.60.120.10:FF:000005">
    <property type="entry name" value="Germin-like protein subfamily 1 member 8"/>
    <property type="match status" value="1"/>
</dbReference>
<dbReference type="Gene3D" id="2.60.120.10">
    <property type="entry name" value="Jelly Rolls"/>
    <property type="match status" value="1"/>
</dbReference>
<dbReference type="InterPro" id="IPR006045">
    <property type="entry name" value="Cupin_1"/>
</dbReference>
<dbReference type="InterPro" id="IPR001929">
    <property type="entry name" value="Germin"/>
</dbReference>
<dbReference type="InterPro" id="IPR019780">
    <property type="entry name" value="Germin_Mn-BS"/>
</dbReference>
<dbReference type="InterPro" id="IPR014710">
    <property type="entry name" value="RmlC-like_jellyroll"/>
</dbReference>
<dbReference type="InterPro" id="IPR011051">
    <property type="entry name" value="RmlC_Cupin_sf"/>
</dbReference>
<dbReference type="PANTHER" id="PTHR31238">
    <property type="entry name" value="GERMIN-LIKE PROTEIN SUBFAMILY 3 MEMBER 3"/>
    <property type="match status" value="1"/>
</dbReference>
<dbReference type="Pfam" id="PF00190">
    <property type="entry name" value="Cupin_1"/>
    <property type="match status" value="1"/>
</dbReference>
<dbReference type="PRINTS" id="PR00325">
    <property type="entry name" value="GERMIN"/>
</dbReference>
<dbReference type="SMART" id="SM00835">
    <property type="entry name" value="Cupin_1"/>
    <property type="match status" value="1"/>
</dbReference>
<dbReference type="SUPFAM" id="SSF51182">
    <property type="entry name" value="RmlC-like cupins"/>
    <property type="match status" value="1"/>
</dbReference>
<dbReference type="PROSITE" id="PS00725">
    <property type="entry name" value="GERMIN"/>
    <property type="match status" value="1"/>
</dbReference>
<name>GL13_ARATH</name>
<gene>
    <name type="ordered locus">At3g04170</name>
    <name type="ORF">T6K12.21</name>
</gene>
<protein>
    <recommendedName>
        <fullName>Germin-like protein subfamily 1 member 3</fullName>
    </recommendedName>
</protein>
<reference key="1">
    <citation type="journal article" date="2000" name="Nature">
        <title>Sequence and analysis of chromosome 3 of the plant Arabidopsis thaliana.</title>
        <authorList>
            <person name="Salanoubat M."/>
            <person name="Lemcke K."/>
            <person name="Rieger M."/>
            <person name="Ansorge W."/>
            <person name="Unseld M."/>
            <person name="Fartmann B."/>
            <person name="Valle G."/>
            <person name="Bloecker H."/>
            <person name="Perez-Alonso M."/>
            <person name="Obermaier B."/>
            <person name="Delseny M."/>
            <person name="Boutry M."/>
            <person name="Grivell L.A."/>
            <person name="Mache R."/>
            <person name="Puigdomenech P."/>
            <person name="De Simone V."/>
            <person name="Choisne N."/>
            <person name="Artiguenave F."/>
            <person name="Robert C."/>
            <person name="Brottier P."/>
            <person name="Wincker P."/>
            <person name="Cattolico L."/>
            <person name="Weissenbach J."/>
            <person name="Saurin W."/>
            <person name="Quetier F."/>
            <person name="Schaefer M."/>
            <person name="Mueller-Auer S."/>
            <person name="Gabel C."/>
            <person name="Fuchs M."/>
            <person name="Benes V."/>
            <person name="Wurmbach E."/>
            <person name="Drzonek H."/>
            <person name="Erfle H."/>
            <person name="Jordan N."/>
            <person name="Bangert S."/>
            <person name="Wiedelmann R."/>
            <person name="Kranz H."/>
            <person name="Voss H."/>
            <person name="Holland R."/>
            <person name="Brandt P."/>
            <person name="Nyakatura G."/>
            <person name="Vezzi A."/>
            <person name="D'Angelo M."/>
            <person name="Pallavicini A."/>
            <person name="Toppo S."/>
            <person name="Simionati B."/>
            <person name="Conrad A."/>
            <person name="Hornischer K."/>
            <person name="Kauer G."/>
            <person name="Loehnert T.-H."/>
            <person name="Nordsiek G."/>
            <person name="Reichelt J."/>
            <person name="Scharfe M."/>
            <person name="Schoen O."/>
            <person name="Bargues M."/>
            <person name="Terol J."/>
            <person name="Climent J."/>
            <person name="Navarro P."/>
            <person name="Collado C."/>
            <person name="Perez-Perez A."/>
            <person name="Ottenwaelder B."/>
            <person name="Duchemin D."/>
            <person name="Cooke R."/>
            <person name="Laudie M."/>
            <person name="Berger-Llauro C."/>
            <person name="Purnelle B."/>
            <person name="Masuy D."/>
            <person name="de Haan M."/>
            <person name="Maarse A.C."/>
            <person name="Alcaraz J.-P."/>
            <person name="Cottet A."/>
            <person name="Casacuberta E."/>
            <person name="Monfort A."/>
            <person name="Argiriou A."/>
            <person name="Flores M."/>
            <person name="Liguori R."/>
            <person name="Vitale D."/>
            <person name="Mannhaupt G."/>
            <person name="Haase D."/>
            <person name="Schoof H."/>
            <person name="Rudd S."/>
            <person name="Zaccaria P."/>
            <person name="Mewes H.-W."/>
            <person name="Mayer K.F.X."/>
            <person name="Kaul S."/>
            <person name="Town C.D."/>
            <person name="Koo H.L."/>
            <person name="Tallon L.J."/>
            <person name="Jenkins J."/>
            <person name="Rooney T."/>
            <person name="Rizzo M."/>
            <person name="Walts A."/>
            <person name="Utterback T."/>
            <person name="Fujii C.Y."/>
            <person name="Shea T.P."/>
            <person name="Creasy T.H."/>
            <person name="Haas B."/>
            <person name="Maiti R."/>
            <person name="Wu D."/>
            <person name="Peterson J."/>
            <person name="Van Aken S."/>
            <person name="Pai G."/>
            <person name="Militscher J."/>
            <person name="Sellers P."/>
            <person name="Gill J.E."/>
            <person name="Feldblyum T.V."/>
            <person name="Preuss D."/>
            <person name="Lin X."/>
            <person name="Nierman W.C."/>
            <person name="Salzberg S.L."/>
            <person name="White O."/>
            <person name="Venter J.C."/>
            <person name="Fraser C.M."/>
            <person name="Kaneko T."/>
            <person name="Nakamura Y."/>
            <person name="Sato S."/>
            <person name="Kato T."/>
            <person name="Asamizu E."/>
            <person name="Sasamoto S."/>
            <person name="Kimura T."/>
            <person name="Idesawa K."/>
            <person name="Kawashima K."/>
            <person name="Kishida Y."/>
            <person name="Kiyokawa C."/>
            <person name="Kohara M."/>
            <person name="Matsumoto M."/>
            <person name="Matsuno A."/>
            <person name="Muraki A."/>
            <person name="Nakayama S."/>
            <person name="Nakazaki N."/>
            <person name="Shinpo S."/>
            <person name="Takeuchi C."/>
            <person name="Wada T."/>
            <person name="Watanabe A."/>
            <person name="Yamada M."/>
            <person name="Yasuda M."/>
            <person name="Tabata S."/>
        </authorList>
    </citation>
    <scope>NUCLEOTIDE SEQUENCE [LARGE SCALE GENOMIC DNA]</scope>
    <source>
        <strain>cv. Columbia</strain>
    </source>
</reference>
<reference key="2">
    <citation type="journal article" date="2017" name="Plant J.">
        <title>Araport11: a complete reannotation of the Arabidopsis thaliana reference genome.</title>
        <authorList>
            <person name="Cheng C.Y."/>
            <person name="Krishnakumar V."/>
            <person name="Chan A.P."/>
            <person name="Thibaud-Nissen F."/>
            <person name="Schobel S."/>
            <person name="Town C.D."/>
        </authorList>
    </citation>
    <scope>GENOME REANNOTATION</scope>
    <source>
        <strain>cv. Columbia</strain>
    </source>
</reference>
<reference key="3">
    <citation type="submission" date="2004-06" db="EMBL/GenBank/DDBJ databases">
        <title>Arabidopsis ORF clones.</title>
        <authorList>
            <person name="Cheuk R.F."/>
            <person name="Chen H."/>
            <person name="Kim C.J."/>
            <person name="Shinn P."/>
            <person name="Ecker J.R."/>
        </authorList>
    </citation>
    <scope>NUCLEOTIDE SEQUENCE [LARGE SCALE MRNA]</scope>
    <source>
        <strain>cv. Columbia</strain>
    </source>
</reference>